<dbReference type="EC" id="3.7.1.3" evidence="1"/>
<dbReference type="EMBL" id="CM002238">
    <property type="protein sequence ID" value="EAA29857.1"/>
    <property type="molecule type" value="Genomic_DNA"/>
</dbReference>
<dbReference type="RefSeq" id="XP_959093.1">
    <property type="nucleotide sequence ID" value="XM_954000.1"/>
</dbReference>
<dbReference type="SMR" id="Q7S332"/>
<dbReference type="FunCoup" id="Q7S332">
    <property type="interactions" value="198"/>
</dbReference>
<dbReference type="STRING" id="367110.Q7S332"/>
<dbReference type="PaxDb" id="5141-EFNCRP00000009038"/>
<dbReference type="EnsemblFungi" id="EAA29857">
    <property type="protein sequence ID" value="EAA29857"/>
    <property type="gene ID" value="NCU09183"/>
</dbReference>
<dbReference type="GeneID" id="3875240"/>
<dbReference type="KEGG" id="ncr:NCU09183"/>
<dbReference type="VEuPathDB" id="FungiDB:NCU09183"/>
<dbReference type="HOGENOM" id="CLU_003433_4_0_1"/>
<dbReference type="InParanoid" id="Q7S332"/>
<dbReference type="OMA" id="SHVAYRS"/>
<dbReference type="OrthoDB" id="5978656at2759"/>
<dbReference type="UniPathway" id="UPA00253">
    <property type="reaction ID" value="UER00329"/>
</dbReference>
<dbReference type="UniPathway" id="UPA00334">
    <property type="reaction ID" value="UER00455"/>
</dbReference>
<dbReference type="Proteomes" id="UP000001805">
    <property type="component" value="Chromosome 3, Linkage Group III"/>
</dbReference>
<dbReference type="GO" id="GO:0005737">
    <property type="term" value="C:cytoplasm"/>
    <property type="evidence" value="ECO:0000318"/>
    <property type="project" value="GO_Central"/>
</dbReference>
<dbReference type="GO" id="GO:0030429">
    <property type="term" value="F:kynureninase activity"/>
    <property type="evidence" value="ECO:0000318"/>
    <property type="project" value="GO_Central"/>
</dbReference>
<dbReference type="GO" id="GO:0030170">
    <property type="term" value="F:pyridoxal phosphate binding"/>
    <property type="evidence" value="ECO:0007669"/>
    <property type="project" value="UniProtKB-UniRule"/>
</dbReference>
<dbReference type="GO" id="GO:0034354">
    <property type="term" value="P:'de novo' NAD biosynthetic process from L-tryptophan"/>
    <property type="evidence" value="ECO:0007669"/>
    <property type="project" value="UniProtKB-UniRule"/>
</dbReference>
<dbReference type="GO" id="GO:0043420">
    <property type="term" value="P:anthranilate metabolic process"/>
    <property type="evidence" value="ECO:0000318"/>
    <property type="project" value="GO_Central"/>
</dbReference>
<dbReference type="GO" id="GO:0097053">
    <property type="term" value="P:L-kynurenine catabolic process"/>
    <property type="evidence" value="ECO:0007669"/>
    <property type="project" value="UniProtKB-UniRule"/>
</dbReference>
<dbReference type="GO" id="GO:0019441">
    <property type="term" value="P:L-tryptophan catabolic process to kynurenine"/>
    <property type="evidence" value="ECO:0000318"/>
    <property type="project" value="GO_Central"/>
</dbReference>
<dbReference type="GO" id="GO:0019805">
    <property type="term" value="P:quinolinate biosynthetic process"/>
    <property type="evidence" value="ECO:0007669"/>
    <property type="project" value="UniProtKB-UniRule"/>
</dbReference>
<dbReference type="FunFam" id="3.40.640.10:FF:000031">
    <property type="entry name" value="Kynureninase"/>
    <property type="match status" value="1"/>
</dbReference>
<dbReference type="Gene3D" id="3.90.1150.10">
    <property type="entry name" value="Aspartate Aminotransferase, domain 1"/>
    <property type="match status" value="1"/>
</dbReference>
<dbReference type="Gene3D" id="3.40.640.10">
    <property type="entry name" value="Type I PLP-dependent aspartate aminotransferase-like (Major domain)"/>
    <property type="match status" value="1"/>
</dbReference>
<dbReference type="HAMAP" id="MF_01970">
    <property type="entry name" value="Kynureninase"/>
    <property type="match status" value="1"/>
</dbReference>
<dbReference type="InterPro" id="IPR010111">
    <property type="entry name" value="Kynureninase"/>
</dbReference>
<dbReference type="InterPro" id="IPR015424">
    <property type="entry name" value="PyrdxlP-dep_Trfase"/>
</dbReference>
<dbReference type="InterPro" id="IPR015421">
    <property type="entry name" value="PyrdxlP-dep_Trfase_major"/>
</dbReference>
<dbReference type="InterPro" id="IPR015422">
    <property type="entry name" value="PyrdxlP-dep_Trfase_small"/>
</dbReference>
<dbReference type="NCBIfam" id="TIGR01814">
    <property type="entry name" value="kynureninase"/>
    <property type="match status" value="1"/>
</dbReference>
<dbReference type="PANTHER" id="PTHR14084">
    <property type="entry name" value="KYNURENINASE"/>
    <property type="match status" value="1"/>
</dbReference>
<dbReference type="PANTHER" id="PTHR14084:SF2">
    <property type="entry name" value="KYNURENINASE 2"/>
    <property type="match status" value="1"/>
</dbReference>
<dbReference type="Pfam" id="PF22580">
    <property type="entry name" value="KYNU_C"/>
    <property type="match status" value="1"/>
</dbReference>
<dbReference type="PIRSF" id="PIRSF038800">
    <property type="entry name" value="KYNU"/>
    <property type="match status" value="1"/>
</dbReference>
<dbReference type="SUPFAM" id="SSF53383">
    <property type="entry name" value="PLP-dependent transferases"/>
    <property type="match status" value="1"/>
</dbReference>
<gene>
    <name type="primary">kyn-1</name>
    <name type="synonym">bna5-1</name>
    <name type="ORF">NCU09183</name>
</gene>
<keyword id="KW-0963">Cytoplasm</keyword>
<keyword id="KW-0378">Hydrolase</keyword>
<keyword id="KW-0662">Pyridine nucleotide biosynthesis</keyword>
<keyword id="KW-0663">Pyridoxal phosphate</keyword>
<keyword id="KW-1185">Reference proteome</keyword>
<comment type="function">
    <text evidence="1">Catalyzes the cleavage of L-kynurenine (L-Kyn) and L-3-hydroxykynurenine (L-3OHKyn) into anthranilic acid (AA) and 3-hydroxyanthranilic acid (3-OHAA), respectively.</text>
</comment>
<comment type="catalytic activity">
    <reaction evidence="1">
        <text>L-kynurenine + H2O = anthranilate + L-alanine + H(+)</text>
        <dbReference type="Rhea" id="RHEA:16813"/>
        <dbReference type="ChEBI" id="CHEBI:15377"/>
        <dbReference type="ChEBI" id="CHEBI:15378"/>
        <dbReference type="ChEBI" id="CHEBI:16567"/>
        <dbReference type="ChEBI" id="CHEBI:57959"/>
        <dbReference type="ChEBI" id="CHEBI:57972"/>
        <dbReference type="EC" id="3.7.1.3"/>
    </reaction>
</comment>
<comment type="catalytic activity">
    <reaction evidence="1">
        <text>3-hydroxy-L-kynurenine + H2O = 3-hydroxyanthranilate + L-alanine + H(+)</text>
        <dbReference type="Rhea" id="RHEA:25143"/>
        <dbReference type="ChEBI" id="CHEBI:15377"/>
        <dbReference type="ChEBI" id="CHEBI:15378"/>
        <dbReference type="ChEBI" id="CHEBI:36559"/>
        <dbReference type="ChEBI" id="CHEBI:57972"/>
        <dbReference type="ChEBI" id="CHEBI:58125"/>
        <dbReference type="EC" id="3.7.1.3"/>
    </reaction>
</comment>
<comment type="cofactor">
    <cofactor evidence="1">
        <name>pyridoxal 5'-phosphate</name>
        <dbReference type="ChEBI" id="CHEBI:597326"/>
    </cofactor>
</comment>
<comment type="pathway">
    <text evidence="1">Amino-acid degradation; L-kynurenine degradation; L-alanine and anthranilate from L-kynurenine: step 1/1.</text>
</comment>
<comment type="pathway">
    <text evidence="1">Cofactor biosynthesis; NAD(+) biosynthesis; quinolinate from L-kynurenine: step 2/3.</text>
</comment>
<comment type="subunit">
    <text evidence="1">Homodimer.</text>
</comment>
<comment type="subcellular location">
    <subcellularLocation>
        <location evidence="1">Cytoplasm</location>
    </subcellularLocation>
</comment>
<comment type="similarity">
    <text evidence="1">Belongs to the kynureninase family.</text>
</comment>
<organism>
    <name type="scientific">Neurospora crassa (strain ATCC 24698 / 74-OR23-1A / CBS 708.71 / DSM 1257 / FGSC 987)</name>
    <dbReference type="NCBI Taxonomy" id="367110"/>
    <lineage>
        <taxon>Eukaryota</taxon>
        <taxon>Fungi</taxon>
        <taxon>Dikarya</taxon>
        <taxon>Ascomycota</taxon>
        <taxon>Pezizomycotina</taxon>
        <taxon>Sordariomycetes</taxon>
        <taxon>Sordariomycetidae</taxon>
        <taxon>Sordariales</taxon>
        <taxon>Sordariaceae</taxon>
        <taxon>Neurospora</taxon>
    </lineage>
</organism>
<name>KYNU1_NEUCR</name>
<evidence type="ECO:0000255" key="1">
    <source>
        <dbReference type="HAMAP-Rule" id="MF_03017"/>
    </source>
</evidence>
<sequence length="485" mass="54175">MSDFTSKVKVLRDGQKPEFPSNANTLEYAQSLDAQDELRHFRNEFIIPTRASLKKKALDGIIPGTQANGTTTSTDADTPCIYFVGNSLGAQPKAVRHYLEAQLETWASIGVNGHFSSLSNSPLTPWQDMAADCAAKSAAIVGAADPSEVVIMNTLTVNLHFMMASFYRPTDKRHKIILEWRPFPSDWYAFQSQIEWHGLDPEKSIVEMQPDENLYLSTEKILATIDEHAEDAALLLLPGIQYYTGQLFDIPRITKYAQERGIVVGWDLAHCAGNVELQLHDWNVDFAVWCTYKYLNGGPGSMAGAFVHERHGKVDMSLGKPVFKPRLSGWYGADKSVRFNMDKEFQPTPGAQGFQVSNPSAIDLTSLAAALSVFNKTSMKDLRSKALVLTAYTEHLLDEIVRRQPEGEEPAFKIITPRDPLQRGTQLSLLLRDGLMDKVAAALEENGVVCDKRKPNVIRVAPVPMYCRFEDVWKFMEIFEAAIRG</sequence>
<protein>
    <recommendedName>
        <fullName evidence="1">Kynureninase 1</fullName>
        <ecNumber evidence="1">3.7.1.3</ecNumber>
    </recommendedName>
    <alternativeName>
        <fullName evidence="1">Biosynthesis of nicotinic acid protein 5-1</fullName>
    </alternativeName>
    <alternativeName>
        <fullName evidence="1">L-kynurenine hydrolase 1</fullName>
    </alternativeName>
</protein>
<reference key="1">
    <citation type="journal article" date="2003" name="Nature">
        <title>The genome sequence of the filamentous fungus Neurospora crassa.</title>
        <authorList>
            <person name="Galagan J.E."/>
            <person name="Calvo S.E."/>
            <person name="Borkovich K.A."/>
            <person name="Selker E.U."/>
            <person name="Read N.D."/>
            <person name="Jaffe D.B."/>
            <person name="FitzHugh W."/>
            <person name="Ma L.-J."/>
            <person name="Smirnov S."/>
            <person name="Purcell S."/>
            <person name="Rehman B."/>
            <person name="Elkins T."/>
            <person name="Engels R."/>
            <person name="Wang S."/>
            <person name="Nielsen C.B."/>
            <person name="Butler J."/>
            <person name="Endrizzi M."/>
            <person name="Qui D."/>
            <person name="Ianakiev P."/>
            <person name="Bell-Pedersen D."/>
            <person name="Nelson M.A."/>
            <person name="Werner-Washburne M."/>
            <person name="Selitrennikoff C.P."/>
            <person name="Kinsey J.A."/>
            <person name="Braun E.L."/>
            <person name="Zelter A."/>
            <person name="Schulte U."/>
            <person name="Kothe G.O."/>
            <person name="Jedd G."/>
            <person name="Mewes H.-W."/>
            <person name="Staben C."/>
            <person name="Marcotte E."/>
            <person name="Greenberg D."/>
            <person name="Roy A."/>
            <person name="Foley K."/>
            <person name="Naylor J."/>
            <person name="Stange-Thomann N."/>
            <person name="Barrett R."/>
            <person name="Gnerre S."/>
            <person name="Kamal M."/>
            <person name="Kamvysselis M."/>
            <person name="Mauceli E.W."/>
            <person name="Bielke C."/>
            <person name="Rudd S."/>
            <person name="Frishman D."/>
            <person name="Krystofova S."/>
            <person name="Rasmussen C."/>
            <person name="Metzenberg R.L."/>
            <person name="Perkins D.D."/>
            <person name="Kroken S."/>
            <person name="Cogoni C."/>
            <person name="Macino G."/>
            <person name="Catcheside D.E.A."/>
            <person name="Li W."/>
            <person name="Pratt R.J."/>
            <person name="Osmani S.A."/>
            <person name="DeSouza C.P.C."/>
            <person name="Glass N.L."/>
            <person name="Orbach M.J."/>
            <person name="Berglund J.A."/>
            <person name="Voelker R."/>
            <person name="Yarden O."/>
            <person name="Plamann M."/>
            <person name="Seiler S."/>
            <person name="Dunlap J.C."/>
            <person name="Radford A."/>
            <person name="Aramayo R."/>
            <person name="Natvig D.O."/>
            <person name="Alex L.A."/>
            <person name="Mannhaupt G."/>
            <person name="Ebbole D.J."/>
            <person name="Freitag M."/>
            <person name="Paulsen I."/>
            <person name="Sachs M.S."/>
            <person name="Lander E.S."/>
            <person name="Nusbaum C."/>
            <person name="Birren B.W."/>
        </authorList>
    </citation>
    <scope>NUCLEOTIDE SEQUENCE [LARGE SCALE GENOMIC DNA]</scope>
    <source>
        <strain>ATCC 24698 / 74-OR23-1A / CBS 708.71 / DSM 1257 / FGSC 987</strain>
    </source>
</reference>
<feature type="chain" id="PRO_0000356981" description="Kynureninase 1">
    <location>
        <begin position="1"/>
        <end position="485"/>
    </location>
</feature>
<feature type="binding site" evidence="1">
    <location>
        <position position="155"/>
    </location>
    <ligand>
        <name>pyridoxal 5'-phosphate</name>
        <dbReference type="ChEBI" id="CHEBI:597326"/>
    </ligand>
</feature>
<feature type="binding site" evidence="1">
    <location>
        <position position="156"/>
    </location>
    <ligand>
        <name>pyridoxal 5'-phosphate</name>
        <dbReference type="ChEBI" id="CHEBI:597326"/>
    </ligand>
</feature>
<feature type="binding site" evidence="1">
    <location>
        <begin position="183"/>
        <end position="186"/>
    </location>
    <ligand>
        <name>pyridoxal 5'-phosphate</name>
        <dbReference type="ChEBI" id="CHEBI:597326"/>
    </ligand>
</feature>
<feature type="binding site" evidence="1">
    <location>
        <position position="267"/>
    </location>
    <ligand>
        <name>pyridoxal 5'-phosphate</name>
        <dbReference type="ChEBI" id="CHEBI:597326"/>
    </ligand>
</feature>
<feature type="binding site" evidence="1">
    <location>
        <position position="270"/>
    </location>
    <ligand>
        <name>pyridoxal 5'-phosphate</name>
        <dbReference type="ChEBI" id="CHEBI:597326"/>
    </ligand>
</feature>
<feature type="binding site" evidence="1">
    <location>
        <position position="292"/>
    </location>
    <ligand>
        <name>pyridoxal 5'-phosphate</name>
        <dbReference type="ChEBI" id="CHEBI:597326"/>
    </ligand>
</feature>
<feature type="binding site" evidence="1">
    <location>
        <position position="330"/>
    </location>
    <ligand>
        <name>pyridoxal 5'-phosphate</name>
        <dbReference type="ChEBI" id="CHEBI:597326"/>
    </ligand>
</feature>
<feature type="binding site" evidence="1">
    <location>
        <position position="358"/>
    </location>
    <ligand>
        <name>pyridoxal 5'-phosphate</name>
        <dbReference type="ChEBI" id="CHEBI:597326"/>
    </ligand>
</feature>
<feature type="modified residue" description="N6-(pyridoxal phosphate)lysine" evidence="1">
    <location>
        <position position="293"/>
    </location>
</feature>
<proteinExistence type="inferred from homology"/>
<accession>Q7S332</accession>